<sequence length="180" mass="20909">MKSIYFVAGLFVMLVQGSWQRSLQDTEEKSRSFSASQADPLSDPDQMNEDKRHSQGTFTSDYSKYLDSRRAQDFVQWLMNTKRNRNNIAKRHDEFERHAEGTFTSDVSSYLEGQAAKEFIAWLVKGRGRRDFPEEVAIVEELGRRHADGSFSDEMNTILDNLAARDFINWLIQTKITDRK</sequence>
<reference key="1">
    <citation type="journal article" date="1988" name="J. Biol. Chem.">
        <title>Glucagon gene expression in vertebrate brain.</title>
        <authorList>
            <person name="Drucker D.J."/>
            <person name="Asa S."/>
        </authorList>
    </citation>
    <scope>NUCLEOTIDE SEQUENCE [MRNA]</scope>
</reference>
<reference key="2">
    <citation type="journal article" date="1986" name="Nucleic Acids Res.">
        <title>Structure of the human glucagon gene.</title>
        <authorList>
            <person name="White J.W."/>
            <person name="Saunders G.F."/>
        </authorList>
    </citation>
    <scope>NUCLEOTIDE SEQUENCE [GENOMIC DNA]</scope>
</reference>
<reference key="3">
    <citation type="journal article" date="1983" name="Nature">
        <title>Exon duplication and divergence in the human preproglucagon gene.</title>
        <authorList>
            <person name="Bell G.I."/>
            <person name="Sanchez-Pescador R."/>
            <person name="Laybourn P.J."/>
            <person name="Najarian R.C."/>
        </authorList>
    </citation>
    <scope>NUCLEOTIDE SEQUENCE [GENOMIC DNA]</scope>
    <source>
        <tissue>Liver</tissue>
    </source>
</reference>
<reference key="4">
    <citation type="submission" date="2003-05" db="EMBL/GenBank/DDBJ databases">
        <title>Cloning of human full-length CDSs in BD Creator(TM) system donor vector.</title>
        <authorList>
            <person name="Kalnine N."/>
            <person name="Chen X."/>
            <person name="Rolfs A."/>
            <person name="Halleck A."/>
            <person name="Hines L."/>
            <person name="Eisenstein S."/>
            <person name="Koundinya M."/>
            <person name="Raphael J."/>
            <person name="Moreira D."/>
            <person name="Kelley T."/>
            <person name="LaBaer J."/>
            <person name="Lin Y."/>
            <person name="Phelan M."/>
            <person name="Farmer A."/>
        </authorList>
    </citation>
    <scope>NUCLEOTIDE SEQUENCE [LARGE SCALE MRNA]</scope>
</reference>
<reference key="5">
    <citation type="journal article" date="2005" name="Nature">
        <title>Generation and annotation of the DNA sequences of human chromosomes 2 and 4.</title>
        <authorList>
            <person name="Hillier L.W."/>
            <person name="Graves T.A."/>
            <person name="Fulton R.S."/>
            <person name="Fulton L.A."/>
            <person name="Pepin K.H."/>
            <person name="Minx P."/>
            <person name="Wagner-McPherson C."/>
            <person name="Layman D."/>
            <person name="Wylie K."/>
            <person name="Sekhon M."/>
            <person name="Becker M.C."/>
            <person name="Fewell G.A."/>
            <person name="Delehaunty K.D."/>
            <person name="Miner T.L."/>
            <person name="Nash W.E."/>
            <person name="Kremitzki C."/>
            <person name="Oddy L."/>
            <person name="Du H."/>
            <person name="Sun H."/>
            <person name="Bradshaw-Cordum H."/>
            <person name="Ali J."/>
            <person name="Carter J."/>
            <person name="Cordes M."/>
            <person name="Harris A."/>
            <person name="Isak A."/>
            <person name="van Brunt A."/>
            <person name="Nguyen C."/>
            <person name="Du F."/>
            <person name="Courtney L."/>
            <person name="Kalicki J."/>
            <person name="Ozersky P."/>
            <person name="Abbott S."/>
            <person name="Armstrong J."/>
            <person name="Belter E.A."/>
            <person name="Caruso L."/>
            <person name="Cedroni M."/>
            <person name="Cotton M."/>
            <person name="Davidson T."/>
            <person name="Desai A."/>
            <person name="Elliott G."/>
            <person name="Erb T."/>
            <person name="Fronick C."/>
            <person name="Gaige T."/>
            <person name="Haakenson W."/>
            <person name="Haglund K."/>
            <person name="Holmes A."/>
            <person name="Harkins R."/>
            <person name="Kim K."/>
            <person name="Kruchowski S.S."/>
            <person name="Strong C.M."/>
            <person name="Grewal N."/>
            <person name="Goyea E."/>
            <person name="Hou S."/>
            <person name="Levy A."/>
            <person name="Martinka S."/>
            <person name="Mead K."/>
            <person name="McLellan M.D."/>
            <person name="Meyer R."/>
            <person name="Randall-Maher J."/>
            <person name="Tomlinson C."/>
            <person name="Dauphin-Kohlberg S."/>
            <person name="Kozlowicz-Reilly A."/>
            <person name="Shah N."/>
            <person name="Swearengen-Shahid S."/>
            <person name="Snider J."/>
            <person name="Strong J.T."/>
            <person name="Thompson J."/>
            <person name="Yoakum M."/>
            <person name="Leonard S."/>
            <person name="Pearman C."/>
            <person name="Trani L."/>
            <person name="Radionenko M."/>
            <person name="Waligorski J.E."/>
            <person name="Wang C."/>
            <person name="Rock S.M."/>
            <person name="Tin-Wollam A.-M."/>
            <person name="Maupin R."/>
            <person name="Latreille P."/>
            <person name="Wendl M.C."/>
            <person name="Yang S.-P."/>
            <person name="Pohl C."/>
            <person name="Wallis J.W."/>
            <person name="Spieth J."/>
            <person name="Bieri T.A."/>
            <person name="Berkowicz N."/>
            <person name="Nelson J.O."/>
            <person name="Osborne J."/>
            <person name="Ding L."/>
            <person name="Meyer R."/>
            <person name="Sabo A."/>
            <person name="Shotland Y."/>
            <person name="Sinha P."/>
            <person name="Wohldmann P.E."/>
            <person name="Cook L.L."/>
            <person name="Hickenbotham M.T."/>
            <person name="Eldred J."/>
            <person name="Williams D."/>
            <person name="Jones T.A."/>
            <person name="She X."/>
            <person name="Ciccarelli F.D."/>
            <person name="Izaurralde E."/>
            <person name="Taylor J."/>
            <person name="Schmutz J."/>
            <person name="Myers R.M."/>
            <person name="Cox D.R."/>
            <person name="Huang X."/>
            <person name="McPherson J.D."/>
            <person name="Mardis E.R."/>
            <person name="Clifton S.W."/>
            <person name="Warren W.C."/>
            <person name="Chinwalla A.T."/>
            <person name="Eddy S.R."/>
            <person name="Marra M.A."/>
            <person name="Ovcharenko I."/>
            <person name="Furey T.S."/>
            <person name="Miller W."/>
            <person name="Eichler E.E."/>
            <person name="Bork P."/>
            <person name="Suyama M."/>
            <person name="Torrents D."/>
            <person name="Waterston R.H."/>
            <person name="Wilson R.K."/>
        </authorList>
    </citation>
    <scope>NUCLEOTIDE SEQUENCE [LARGE SCALE GENOMIC DNA]</scope>
</reference>
<reference key="6">
    <citation type="journal article" date="2004" name="Genome Res.">
        <title>The status, quality, and expansion of the NIH full-length cDNA project: the Mammalian Gene Collection (MGC).</title>
        <authorList>
            <consortium name="The MGC Project Team"/>
        </authorList>
    </citation>
    <scope>NUCLEOTIDE SEQUENCE [LARGE SCALE MRNA]</scope>
    <source>
        <tissue>Pancreas</tissue>
    </source>
</reference>
<reference key="7">
    <citation type="journal article" date="1972" name="FEBS Lett.">
        <title>The amino acid sequence of human glucagon.</title>
        <authorList>
            <person name="Thomsen J."/>
            <person name="Kristiansen K."/>
            <person name="Brunfeldt K."/>
            <person name="Sundby F."/>
        </authorList>
    </citation>
    <scope>PROTEIN SEQUENCE OF 53-81</scope>
</reference>
<reference key="8">
    <citation type="journal article" date="1989" name="J. Biol. Chem.">
        <title>Complete sequences of glucagon-like peptide-1 from human and pig small intestine.</title>
        <authorList>
            <person name="Orskov C."/>
            <person name="Bersani M."/>
            <person name="Johnsen A.H."/>
            <person name="Hoejrup P."/>
            <person name="Holst J.J."/>
        </authorList>
    </citation>
    <scope>PROTEIN SEQUENCE OF 98-127</scope>
    <scope>AMIDATION AT ARG-127</scope>
</reference>
<reference key="9">
    <citation type="journal article" date="1993" name="Diabetes">
        <title>Biological effects and metabolic rates of glucagonlike peptide-1 7-36 amide and glucagonlike peptide-1 7-37 in healthy subjects are indistinguishable.</title>
        <authorList>
            <person name="Orskov C."/>
            <person name="Wettergren A."/>
            <person name="Holst J.J."/>
        </authorList>
    </citation>
    <scope>FUNCTION OF GLP1 BIOACTIVE FORMS</scope>
</reference>
<reference key="10">
    <citation type="journal article" date="2003" name="J. Clin. Endocrinol. Metab.">
        <title>Oxyntomodulin suppresses appetite and reduces food intake in humans.</title>
        <authorList>
            <person name="Cohen M.A."/>
            <person name="Ellis S.M."/>
            <person name="Le Roux C.W."/>
            <person name="Batterham R.L."/>
            <person name="Park A."/>
            <person name="Patterson M."/>
            <person name="Frost G.S."/>
            <person name="Ghatei M.A."/>
            <person name="Bloom S.R."/>
        </authorList>
    </citation>
    <scope>FUNCTION OF OXYNTOMODULIN</scope>
</reference>
<reference key="11">
    <citation type="journal article" date="2003" name="Acta Paediatr.">
        <title>Postnatal and postprandial changes in plasma concentrations of glicentin in term and preterm infants.</title>
        <authorList>
            <person name="Tadokoro R."/>
            <person name="Shimizu T."/>
            <person name="Hosaka A."/>
            <person name="Kaneko N."/>
            <person name="Satoh Y."/>
            <person name="Yamashiro Y."/>
        </authorList>
    </citation>
    <scope>FUNCTION OF GLICENTIN</scope>
</reference>
<reference key="12">
    <citation type="journal article" date="1997" name="FEBS Lett.">
        <title>Role of the prohormone convertase PC2 in the processing of proglucagon to glucagon.</title>
        <authorList>
            <person name="Rouille Y."/>
            <person name="Bianchi M."/>
            <person name="Irminger J.C."/>
            <person name="Halban P.A."/>
        </authorList>
    </citation>
    <scope>PROTEOLYTIC PROCESSING BY PCSK2</scope>
</reference>
<reference key="13">
    <citation type="journal article" date="2003" name="Protein Expr. Purif.">
        <title>Expression, purification, and PC1-mediated processing of human proglucagon, glicentin, and major proglucagon fragment.</title>
        <authorList>
            <person name="Bonic A."/>
            <person name="Mackin R.B."/>
        </authorList>
    </citation>
    <scope>PROTEOLYTIC PROCESSING BY PCSK1</scope>
</reference>
<reference key="14">
    <citation type="journal article" date="1999" name="Endocr. Rev.">
        <title>The glucagon-like peptides.</title>
        <authorList>
            <person name="Kieffer T.J."/>
            <person name="Habener J.F."/>
        </authorList>
    </citation>
    <scope>REVIEW</scope>
</reference>
<reference key="15">
    <citation type="journal article" date="1999" name="Trends Endocrinol. Metab.">
        <title>Glucagon-like peptide 2.</title>
        <authorList>
            <person name="Drucker D.J."/>
        </authorList>
    </citation>
    <scope>REVIEW</scope>
</reference>
<reference key="16">
    <citation type="journal article" date="2003" name="Am. J. Physiol.">
        <title>Glucagon and regulation of glucose metabolism.</title>
        <authorList>
            <person name="Jiang G."/>
            <person name="Zhang B.B."/>
        </authorList>
    </citation>
    <scope>REVIEW</scope>
</reference>
<reference key="17">
    <citation type="journal article" date="2003" name="Can. J. Physiol. Pharmacol.">
        <title>Direct and indirect mechanisms regulating secretion of glucagon-like peptide-1 and glucagon-like peptide-2.</title>
        <authorList>
            <person name="Brubaker P.L."/>
            <person name="Anini Y."/>
        </authorList>
    </citation>
    <scope>REVIEW</scope>
</reference>
<reference key="18">
    <citation type="journal article" date="2003" name="Mol. Endocrinol.">
        <title>Glucagon-like peptides: regulators of cell proliferation, differentiation, and apoptosis.</title>
        <authorList>
            <person name="Drucker D.J."/>
        </authorList>
    </citation>
    <scope>REVIEW</scope>
</reference>
<reference key="19">
    <citation type="journal article" date="2011" name="Nat. Med.">
        <title>Interleukin-6 enhances insulin secretion by increasing glucagon-like peptide-1 secretion from L cells and alpha cells.</title>
        <authorList>
            <person name="Ellingsgaard H."/>
            <person name="Hauselmann I."/>
            <person name="Schuler B."/>
            <person name="Habib A.M."/>
            <person name="Baggio L.L."/>
            <person name="Meier D.T."/>
            <person name="Eppler E."/>
            <person name="Bouzakri K."/>
            <person name="Wueest S."/>
            <person name="Muller Y.D."/>
            <person name="Hansen A.M."/>
            <person name="Reinecke M."/>
            <person name="Konrad D."/>
            <person name="Gassmann M."/>
            <person name="Reimann F."/>
            <person name="Halban P.A."/>
            <person name="Gromada J."/>
            <person name="Drucker D.J."/>
            <person name="Gribble F.M."/>
            <person name="Ehses J.A."/>
            <person name="Donath M.Y."/>
        </authorList>
    </citation>
    <scope>INDUCTION BY IL6 (GLUCAGON-LIKE PEPTIDE 1)</scope>
    <scope>FUNCTION (GLUCAGON-LIKE PEPTIDE 1)</scope>
    <scope>TISSUE SPECIFICITY (GLUCAGON-LIKE PEPTIDE 1)</scope>
</reference>
<reference key="20">
    <citation type="journal article" date="1998" name="J. Med. Chem.">
        <title>Structure-function studies on positions 17, 18, and 21 replacement analogues of glucagon: the importance of charged residues and salt bridges in glucagon biological activity.</title>
        <authorList>
            <person name="Sturm N.S."/>
            <person name="Lin Y."/>
            <person name="Burley S.K."/>
            <person name="Krstenansky J.L."/>
            <person name="Ahn J.-M."/>
            <person name="Azizeh B.Y."/>
            <person name="Trivedi D."/>
            <person name="Hruby V.J."/>
        </authorList>
    </citation>
    <scope>X-RAY CRYSTALLOGRAPHY (3.0 ANGSTROMS) OF 53-81</scope>
</reference>
<reference key="21">
    <citation type="journal article" date="2002" name="FEBS Lett.">
        <title>NMR studies of the aggregation of glucagon-like peptide-1: formation of a symmetric helical dimer.</title>
        <authorList>
            <person name="Chang X."/>
            <person name="Keller D."/>
            <person name="O'Donoghue S.I."/>
            <person name="Led J.J."/>
        </authorList>
    </citation>
    <scope>STRUCTURE BY NMR OF 98-127</scope>
</reference>
<reference key="22">
    <citation type="journal article" date="2003" name="Biochemistry">
        <title>NMR solution structure of the glucagon antagonist [desHis1, desPhe6, Glu9]glucagon amide in the presence of perdeuterated dodecylphosphocholine micelles.</title>
        <authorList>
            <person name="Ying J."/>
            <person name="Ahn J.-M."/>
            <person name="Jacobsen N.E."/>
            <person name="Brown M.F."/>
            <person name="Hruby V.J."/>
        </authorList>
    </citation>
    <scope>STRUCTURE BY NMR OF GLUCAGON ANTAGONIST</scope>
</reference>
<feature type="signal peptide">
    <location>
        <begin position="1"/>
        <end position="20"/>
    </location>
</feature>
<feature type="peptide" id="PRO_0000011253" description="Glicentin" evidence="1">
    <location>
        <begin position="21"/>
        <end position="89"/>
    </location>
</feature>
<feature type="peptide" id="PRO_0000011254" description="Glicentin-related polypeptide" evidence="3">
    <location>
        <begin position="21"/>
        <end position="50"/>
    </location>
</feature>
<feature type="peptide" id="PRO_0000011255" description="Oxyntomodulin" evidence="2">
    <location>
        <begin position="53"/>
        <end position="89"/>
    </location>
</feature>
<feature type="peptide" id="PRO_0000011256" description="Glucagon" evidence="7">
    <location>
        <begin position="53"/>
        <end position="81"/>
    </location>
</feature>
<feature type="propeptide" id="PRO_0000011257" evidence="10">
    <location>
        <begin position="84"/>
        <end position="89"/>
    </location>
</feature>
<feature type="peptide" id="PRO_0000011258" description="Glucagon-like peptide 1" evidence="10">
    <location>
        <begin position="92"/>
        <end position="128"/>
    </location>
</feature>
<feature type="peptide" id="PRO_0000011259" description="Glucagon-like peptide 1(7-37)" evidence="10">
    <location>
        <begin position="98"/>
        <end position="128"/>
    </location>
</feature>
<feature type="peptide" id="PRO_0000011260" description="Glucagon-like peptide 1(7-36)" evidence="10">
    <location>
        <begin position="98"/>
        <end position="127"/>
    </location>
</feature>
<feature type="propeptide" id="PRO_0000011261" evidence="4">
    <location>
        <begin position="131"/>
        <end position="145"/>
    </location>
</feature>
<feature type="peptide" id="PRO_0000011262" description="Glucagon-like peptide 2" evidence="4">
    <location>
        <begin position="146"/>
        <end position="178"/>
    </location>
</feature>
<feature type="region of interest" description="Disordered" evidence="6">
    <location>
        <begin position="26"/>
        <end position="59"/>
    </location>
</feature>
<feature type="site" description="Cleavage; by PCSK2">
    <location>
        <begin position="52"/>
        <end position="53"/>
    </location>
</feature>
<feature type="site" description="Cleavage; by PCSK1 and PCSK2">
    <location>
        <begin position="83"/>
        <end position="84"/>
    </location>
</feature>
<feature type="site" description="Cleavage; by PCSK1">
    <location>
        <begin position="91"/>
        <end position="92"/>
    </location>
</feature>
<feature type="site" description="Cleavage; by PCSK1">
    <location>
        <begin position="97"/>
        <end position="98"/>
    </location>
</feature>
<feature type="site" description="Cleavage; by PCSK1">
    <location>
        <begin position="130"/>
        <end position="131"/>
    </location>
</feature>
<feature type="site" description="Cleavage; by PCSK1">
    <location>
        <begin position="145"/>
        <end position="146"/>
    </location>
</feature>
<feature type="modified residue" description="Phosphoserine" evidence="5">
    <location>
        <position position="54"/>
    </location>
</feature>
<feature type="modified residue" description="Phosphoserine" evidence="5">
    <location>
        <position position="105"/>
    </location>
</feature>
<feature type="modified residue" description="Phosphoserine" evidence="5">
    <location>
        <position position="108"/>
    </location>
</feature>
<feature type="modified residue" description="Arginine amide" evidence="10">
    <location>
        <position position="127"/>
    </location>
</feature>
<feature type="modified residue" description="Phosphoserine" evidence="5">
    <location>
        <position position="150"/>
    </location>
</feature>
<feature type="modified residue" description="Phosphoserine" evidence="5">
    <location>
        <position position="152"/>
    </location>
</feature>
<feature type="sequence variant" id="VAR_014596" description="In dbSNP:rs5650.">
    <original>A</original>
    <variation>V</variation>
    <location>
        <position position="115"/>
    </location>
</feature>
<feature type="sequence conflict" description="In Ref. 2; CAA27627." evidence="12" ref="2">
    <original>K</original>
    <variation>N</variation>
    <location>
        <position position="82"/>
    </location>
</feature>
<feature type="helix" evidence="21">
    <location>
        <begin position="57"/>
        <end position="79"/>
    </location>
</feature>
<feature type="helix" evidence="20">
    <location>
        <begin position="104"/>
        <end position="124"/>
    </location>
</feature>
<feature type="helix" evidence="22">
    <location>
        <begin position="148"/>
        <end position="173"/>
    </location>
</feature>
<feature type="helix" evidence="19">
    <location>
        <begin position="174"/>
        <end position="177"/>
    </location>
</feature>
<evidence type="ECO:0000250" key="1">
    <source>
        <dbReference type="UniProtKB" id="P01274"/>
    </source>
</evidence>
<evidence type="ECO:0000250" key="2">
    <source>
        <dbReference type="UniProtKB" id="P06883"/>
    </source>
</evidence>
<evidence type="ECO:0000250" key="3">
    <source>
        <dbReference type="UniProtKB" id="P09686"/>
    </source>
</evidence>
<evidence type="ECO:0000250" key="4">
    <source>
        <dbReference type="UniProtKB" id="P15438"/>
    </source>
</evidence>
<evidence type="ECO:0000250" key="5">
    <source>
        <dbReference type="UniProtKB" id="P55095"/>
    </source>
</evidence>
<evidence type="ECO:0000256" key="6">
    <source>
        <dbReference type="SAM" id="MobiDB-lite"/>
    </source>
</evidence>
<evidence type="ECO:0000269" key="7">
    <source>
    </source>
</evidence>
<evidence type="ECO:0000269" key="8">
    <source>
    </source>
</evidence>
<evidence type="ECO:0000269" key="9">
    <source>
    </source>
</evidence>
<evidence type="ECO:0000269" key="10">
    <source>
    </source>
</evidence>
<evidence type="ECO:0000269" key="11">
    <source>
    </source>
</evidence>
<evidence type="ECO:0000305" key="12"/>
<evidence type="ECO:0000305" key="13">
    <source>
    </source>
</evidence>
<evidence type="ECO:0000305" key="14">
    <source>
    </source>
</evidence>
<evidence type="ECO:0000305" key="15">
    <source>
    </source>
</evidence>
<evidence type="ECO:0000305" key="16">
    <source>
    </source>
</evidence>
<evidence type="ECO:0000305" key="17">
    <source>
    </source>
</evidence>
<evidence type="ECO:0000312" key="18">
    <source>
        <dbReference type="HGNC" id="HGNC:4191"/>
    </source>
</evidence>
<evidence type="ECO:0007829" key="19">
    <source>
        <dbReference type="PDB" id="2L64"/>
    </source>
</evidence>
<evidence type="ECO:0007829" key="20">
    <source>
        <dbReference type="PDB" id="4ZGM"/>
    </source>
</evidence>
<evidence type="ECO:0007829" key="21">
    <source>
        <dbReference type="PDB" id="6PHI"/>
    </source>
</evidence>
<evidence type="ECO:0007829" key="22">
    <source>
        <dbReference type="PDB" id="7D68"/>
    </source>
</evidence>
<protein>
    <recommendedName>
        <fullName>Pro-glucagon</fullName>
    </recommendedName>
    <component>
        <recommendedName>
            <fullName>Glicentin</fullName>
        </recommendedName>
    </component>
    <component>
        <recommendedName>
            <fullName>Glicentin-related polypeptide</fullName>
            <shortName>GRPP</shortName>
        </recommendedName>
    </component>
    <component>
        <recommendedName>
            <fullName>Oxyntomodulin</fullName>
            <shortName>OXM</shortName>
            <shortName>OXY</shortName>
        </recommendedName>
    </component>
    <component>
        <recommendedName>
            <fullName>Glucagon</fullName>
        </recommendedName>
    </component>
    <component>
        <recommendedName>
            <fullName evidence="12">Glucagon-like peptide 1</fullName>
            <shortName>GLP-1</shortName>
        </recommendedName>
        <alternativeName>
            <fullName>Incretin hormone</fullName>
        </alternativeName>
    </component>
    <component>
        <recommendedName>
            <fullName>Glucagon-like peptide 1(7-37)</fullName>
            <shortName>GLP-1(7-37)</shortName>
        </recommendedName>
    </component>
    <component>
        <recommendedName>
            <fullName>Glucagon-like peptide 1(7-36)</fullName>
            <shortName>GLP-1(7-36)</shortName>
        </recommendedName>
    </component>
    <component>
        <recommendedName>
            <fullName>Glucagon-like peptide 2</fullName>
            <shortName>GLP-2</shortName>
        </recommendedName>
    </component>
</protein>
<proteinExistence type="evidence at protein level"/>
<accession>P01275</accession>
<accession>A6NN65</accession>
<accession>Q53TP6</accession>
<name>GLUC_HUMAN</name>
<organism>
    <name type="scientific">Homo sapiens</name>
    <name type="common">Human</name>
    <dbReference type="NCBI Taxonomy" id="9606"/>
    <lineage>
        <taxon>Eukaryota</taxon>
        <taxon>Metazoa</taxon>
        <taxon>Chordata</taxon>
        <taxon>Craniata</taxon>
        <taxon>Vertebrata</taxon>
        <taxon>Euteleostomi</taxon>
        <taxon>Mammalia</taxon>
        <taxon>Eutheria</taxon>
        <taxon>Euarchontoglires</taxon>
        <taxon>Primates</taxon>
        <taxon>Haplorrhini</taxon>
        <taxon>Catarrhini</taxon>
        <taxon>Hominidae</taxon>
        <taxon>Homo</taxon>
    </lineage>
</organism>
<keyword id="KW-0002">3D-structure</keyword>
<keyword id="KW-0027">Amidation</keyword>
<keyword id="KW-0165">Cleavage on pair of basic residues</keyword>
<keyword id="KW-0903">Direct protein sequencing</keyword>
<keyword id="KW-0372">Hormone</keyword>
<keyword id="KW-0582">Pharmaceutical</keyword>
<keyword id="KW-0597">Phosphoprotein</keyword>
<keyword id="KW-1267">Proteomics identification</keyword>
<keyword id="KW-1185">Reference proteome</keyword>
<keyword id="KW-0964">Secreted</keyword>
<keyword id="KW-0732">Signal</keyword>
<comment type="function">
    <molecule>Glucagon</molecule>
    <text evidence="14 16">Plays a key role in glucose metabolism and homeostasis. Regulates blood glucose by increasing gluconeogenesis and decreasing glycolysis. A counterregulatory hormone of insulin, raises plasma glucose levels in response to insulin-induced hypoglycemia. Plays an important role in initiating and maintaining hyperglycemic conditions in diabetes.</text>
</comment>
<comment type="function">
    <molecule>Glucagon-like peptide 1</molecule>
    <text evidence="9 14 15 17">Potent stimulator of glucose-dependent insulin release. Also stimulates insulin release in response to IL6 (PubMed:22037645). Plays important roles on gastric motility and the suppression of plasma glucagon levels. May be involved in the suppression of satiety and stimulation of glucose disposal in peripheral tissues, independent of the actions of insulin. Has growth-promoting activities on intestinal epithelium. May also regulate the hypothalamic pituitary axis (HPA) via effects on LH, TSH, CRH, oxytocin, and vasopressin secretion. Increases islet mass through stimulation of islet neogenesis and pancreatic beta cell proliferation. Inhibits beta cell apoptosis (Probable).</text>
</comment>
<comment type="function">
    <molecule>Glucagon-like peptide 2</molecule>
    <text evidence="13 14 15 17">Stimulates intestinal growth and up-regulates villus height in the small intestine, concomitant with increased crypt cell proliferation and decreased enterocyte apoptosis. The gastrointestinal tract, from the stomach to the colon is the principal target for GLP-2 action. Plays a key role in nutrient homeostasis, enhancing nutrient assimilation through enhanced gastrointestinal function, as well as increasing nutrient disposal. Stimulates intestinal glucose transport and decreases mucosal permeability.</text>
</comment>
<comment type="function">
    <molecule>Oxyntomodulin</molecule>
    <text evidence="14 15">Significantly reduces food intake. Inhibits gastric emptying in humans. Suppression of gastric emptying may lead to increased gastric distension, which may contribute to satiety by causing a sensation of fullness.</text>
</comment>
<comment type="function">
    <molecule>Glicentin</molecule>
    <text evidence="14 15">May modulate gastric acid secretion and the gastro-pyloro-duodenal activity. May play an important role in intestinal mucosal growth in the early period of life.</text>
</comment>
<comment type="interaction">
    <interactant intactId="EBI-7629173">
        <id>P01275</id>
    </interactant>
    <interactant intactId="EBI-2871277">
        <id>P27487</id>
        <label>DPP4</label>
    </interactant>
    <organismsDiffer>false</organismsDiffer>
    <experiments>4</experiments>
</comment>
<comment type="interaction">
    <interactant intactId="EBI-7629173">
        <id>P01275</id>
    </interactant>
    <interactant intactId="EBI-4319803">
        <id>Q12884</id>
        <label>FAP</label>
    </interactant>
    <organismsDiffer>false</organismsDiffer>
    <experiments>4</experiments>
</comment>
<comment type="interaction">
    <interactant intactId="EBI-7629173">
        <id>P01275</id>
    </interactant>
    <interactant intactId="EBI-7629173">
        <id>P01275</id>
        <label>GCG</label>
    </interactant>
    <organismsDiffer>false</organismsDiffer>
    <experiments>3</experiments>
</comment>
<comment type="interaction">
    <interactant intactId="EBI-7629173">
        <id>P01275</id>
    </interactant>
    <interactant intactId="EBI-15653881">
        <id>P48546</id>
        <label>GIPR</label>
    </interactant>
    <organismsDiffer>false</organismsDiffer>
    <experiments>2</experiments>
</comment>
<comment type="interaction">
    <interactant intactId="EBI-7629173">
        <id>P01275</id>
    </interactant>
    <interactant intactId="EBI-15607031">
        <id>P14735-1</id>
        <label>IDE</label>
    </interactant>
    <organismsDiffer>false</organismsDiffer>
    <experiments>3</experiments>
</comment>
<comment type="subcellular location">
    <subcellularLocation>
        <location evidence="12">Secreted</location>
    </subcellularLocation>
</comment>
<comment type="subcellular location">
    <molecule>Glucagon-like peptide 1</molecule>
    <subcellularLocation>
        <location evidence="9">Secreted</location>
    </subcellularLocation>
</comment>
<comment type="tissue specificity">
    <molecule>Glucagon</molecule>
    <text evidence="9">Secreted in the A cells of the islets of Langerhans.</text>
</comment>
<comment type="tissue specificity">
    <molecule>Glucagon-like peptide 1</molecule>
    <text evidence="9">Secreted in the A cells of the islets of Langerhans (PubMed:22037645). Secreted from enteroendocrine L cells throughout the gastrointestinal tract (PubMed:22037645). Also secreted in selected neurons in the brain.</text>
</comment>
<comment type="tissue specificity">
    <molecule>Glucagon-like peptide 2</molecule>
    <text>Secreted from enteroendocrine cells throughout the gastrointestinal tract. Also secreted in selected neurons in the brain.</text>
</comment>
<comment type="tissue specificity">
    <molecule>Glicentin</molecule>
    <text>Secreted from enteroendocrine cells throughout the gastrointestinal tract.</text>
</comment>
<comment type="tissue specificity">
    <molecule>Oxyntomodulin</molecule>
    <text>Secreted from enteroendocrine cells throughout the gastrointestinal tract.</text>
</comment>
<comment type="induction">
    <molecule>Glucagon</molecule>
    <text evidence="14 16">Release is stimulated by hypoglycemia and inhibited by hyperglycemia, insulin, and somatostatin.</text>
</comment>
<comment type="induction">
    <molecule>Glucagon-like peptide 1</molecule>
    <text evidence="9">Production by islet alpha cell is increased by IL6.</text>
</comment>
<comment type="induction">
    <molecule>Glucagon-like peptide 2</molecule>
    <text evidence="13 14 15 17">Induced in response to nutrient ingestion.</text>
</comment>
<comment type="PTM">
    <text evidence="8 10 11">Proglucagon is post-translationally processed in a tissue-specific manner in pancreatic A cells and intestinal L cells. In pancreatic A cells, the major bioactive hormone is glucagon cleaved by PCSK2/PC2. In the intestinal L cells PCSK1/PC1 liberates GLP-1, GLP-2, glicentin and oxyntomodulin. GLP-1 is further N-terminally truncated by post-translational processing in the intestinal L cells resulting in GLP-1(7-37) GLP-1-(7-36)amide. The C-terminal amidation is neither important for the metabolism of GLP-1 nor for its effects on the endocrine pancreas.</text>
</comment>
<comment type="pharmaceutical">
    <text>Available under the names Glucagon (Eli Lilly) and GlucaGen or Glucagon Novo Nordisk (Novo Nordisk). Used to treat severe hypoglycemia in insulin-dependent diabetics.</text>
</comment>
<comment type="miscellaneous">
    <text>In the glucagon antagonist, His-53 and Phe-58 are missing. This antagonist has been successfully utilized to reduce glucose concentration in vivo.</text>
</comment>
<comment type="similarity">
    <text evidence="12">Belongs to the glucagon family.</text>
</comment>
<gene>
    <name evidence="18" type="primary">GCG</name>
</gene>
<dbReference type="EMBL" id="J04040">
    <property type="protein sequence ID" value="AAA52567.1"/>
    <property type="molecule type" value="mRNA"/>
</dbReference>
<dbReference type="EMBL" id="X03991">
    <property type="protein sequence ID" value="CAA27627.1"/>
    <property type="molecule type" value="Genomic_DNA"/>
</dbReference>
<dbReference type="EMBL" id="V01515">
    <property type="protein sequence ID" value="CAA24759.1"/>
    <property type="molecule type" value="Genomic_DNA"/>
</dbReference>
<dbReference type="EMBL" id="BT006813">
    <property type="protein sequence ID" value="AAP35459.1"/>
    <property type="molecule type" value="mRNA"/>
</dbReference>
<dbReference type="EMBL" id="AC007750">
    <property type="protein sequence ID" value="AAY24204.1"/>
    <property type="molecule type" value="Genomic_DNA"/>
</dbReference>
<dbReference type="EMBL" id="BC005278">
    <property type="protein sequence ID" value="AAH05278.1"/>
    <property type="molecule type" value="mRNA"/>
</dbReference>
<dbReference type="CCDS" id="CCDS46439.1"/>
<dbReference type="PIR" id="A24377">
    <property type="entry name" value="GCHU"/>
</dbReference>
<dbReference type="RefSeq" id="NP_002045.1">
    <property type="nucleotide sequence ID" value="NM_002054.5"/>
</dbReference>
<dbReference type="PDB" id="1BH0">
    <property type="method" value="X-ray"/>
    <property type="resolution" value="3.00 A"/>
    <property type="chains" value="A=53-81"/>
</dbReference>
<dbReference type="PDB" id="1D0R">
    <property type="method" value="NMR"/>
    <property type="chains" value="A=98-127"/>
</dbReference>
<dbReference type="PDB" id="1NAU">
    <property type="method" value="NMR"/>
    <property type="chains" value="A=59-81"/>
</dbReference>
<dbReference type="PDB" id="2G49">
    <property type="method" value="X-ray"/>
    <property type="resolution" value="2.50 A"/>
    <property type="chains" value="C/D=53-81"/>
</dbReference>
<dbReference type="PDB" id="2L63">
    <property type="method" value="NMR"/>
    <property type="chains" value="A=146-178"/>
</dbReference>
<dbReference type="PDB" id="2L64">
    <property type="method" value="NMR"/>
    <property type="chains" value="A=146-178"/>
</dbReference>
<dbReference type="PDB" id="2M5P">
    <property type="method" value="NMR"/>
    <property type="chains" value="X=53-81"/>
</dbReference>
<dbReference type="PDB" id="2M5Q">
    <property type="method" value="NMR"/>
    <property type="chains" value="X=53-81"/>
</dbReference>
<dbReference type="PDB" id="3IOL">
    <property type="method" value="X-ray"/>
    <property type="resolution" value="2.10 A"/>
    <property type="chains" value="B=98-128"/>
</dbReference>
<dbReference type="PDB" id="4APD">
    <property type="method" value="NMR"/>
    <property type="chains" value="A=98-128"/>
</dbReference>
<dbReference type="PDB" id="4ZGM">
    <property type="method" value="X-ray"/>
    <property type="resolution" value="1.80 A"/>
    <property type="chains" value="B=98-128"/>
</dbReference>
<dbReference type="PDB" id="5OTU">
    <property type="method" value="X-ray"/>
    <property type="resolution" value="1.80 A"/>
    <property type="chains" value="B/D=98-128"/>
</dbReference>
<dbReference type="PDB" id="5OTV">
    <property type="method" value="X-ray"/>
    <property type="resolution" value="2.00 A"/>
    <property type="chains" value="B/D=98-128"/>
</dbReference>
<dbReference type="PDB" id="5OTW">
    <property type="method" value="X-ray"/>
    <property type="resolution" value="2.10 A"/>
    <property type="chains" value="B/D=98-128"/>
</dbReference>
<dbReference type="PDB" id="5OTX">
    <property type="method" value="X-ray"/>
    <property type="resolution" value="2.00 A"/>
    <property type="chains" value="B/D=98-128"/>
</dbReference>
<dbReference type="PDB" id="5VAI">
    <property type="method" value="EM"/>
    <property type="resolution" value="4.10 A"/>
    <property type="chains" value="P=98-128"/>
</dbReference>
<dbReference type="PDB" id="5YQZ">
    <property type="method" value="X-ray"/>
    <property type="resolution" value="3.00 A"/>
    <property type="chains" value="P=54-81"/>
</dbReference>
<dbReference type="PDB" id="6EDS">
    <property type="method" value="X-ray"/>
    <property type="resolution" value="3.18 A"/>
    <property type="chains" value="C/D=53-81"/>
</dbReference>
<dbReference type="PDB" id="6LMK">
    <property type="method" value="EM"/>
    <property type="resolution" value="3.70 A"/>
    <property type="chains" value="E=53-81"/>
</dbReference>
<dbReference type="PDB" id="6LML">
    <property type="method" value="EM"/>
    <property type="resolution" value="3.90 A"/>
    <property type="chains" value="E=53-81"/>
</dbReference>
<dbReference type="PDB" id="6NZN">
    <property type="method" value="NMR"/>
    <property type="chains" value="A/B/C/D/E/F/G/H/I/J/K/L/M/N/O/P=53-81"/>
</dbReference>
<dbReference type="PDB" id="6PHI">
    <property type="method" value="X-ray"/>
    <property type="resolution" value="1.10 A"/>
    <property type="chains" value="A=53-81"/>
</dbReference>
<dbReference type="PDB" id="6PHJ">
    <property type="method" value="X-ray"/>
    <property type="resolution" value="1.99 A"/>
    <property type="chains" value="A=53-81"/>
</dbReference>
<dbReference type="PDB" id="6PHK">
    <property type="method" value="X-ray"/>
    <property type="resolution" value="1.18 A"/>
    <property type="chains" value="A=53-81"/>
</dbReference>
<dbReference type="PDB" id="6PHL">
    <property type="method" value="X-ray"/>
    <property type="resolution" value="1.44 A"/>
    <property type="chains" value="A=53-81"/>
</dbReference>
<dbReference type="PDB" id="6PHO">
    <property type="method" value="X-ray"/>
    <property type="resolution" value="1.42 A"/>
    <property type="chains" value="A=54-81"/>
</dbReference>
<dbReference type="PDB" id="6PHP">
    <property type="method" value="X-ray"/>
    <property type="resolution" value="1.65 A"/>
    <property type="chains" value="A=53-81"/>
</dbReference>
<dbReference type="PDB" id="6VCB">
    <property type="method" value="EM"/>
    <property type="resolution" value="3.30 A"/>
    <property type="chains" value="P=98-128"/>
</dbReference>
<dbReference type="PDB" id="6X18">
    <property type="method" value="EM"/>
    <property type="resolution" value="2.10 A"/>
    <property type="chains" value="P=98-127"/>
</dbReference>
<dbReference type="PDB" id="7D68">
    <property type="method" value="EM"/>
    <property type="resolution" value="3.00 A"/>
    <property type="chains" value="P=146-178"/>
</dbReference>
<dbReference type="PDB" id="7DUQ">
    <property type="method" value="EM"/>
    <property type="resolution" value="2.50 A"/>
    <property type="chains" value="P=98-127"/>
</dbReference>
<dbReference type="PDB" id="7KI0">
    <property type="method" value="EM"/>
    <property type="resolution" value="2.50 A"/>
    <property type="chains" value="P=98-128"/>
</dbReference>
<dbReference type="PDB" id="7KI1">
    <property type="method" value="EM"/>
    <property type="resolution" value="2.50 A"/>
    <property type="chains" value="P=98-127"/>
</dbReference>
<dbReference type="PDB" id="7XM8">
    <property type="method" value="EM"/>
    <property type="resolution" value="3.90 A"/>
    <property type="chains" value="A/B/C/D/E/F/G/H/I/J/K/L/M/N/O/P/Q/R/S/T/U/V=53-81"/>
</dbReference>
<dbReference type="PDB" id="8ANJ">
    <property type="method" value="X-ray"/>
    <property type="resolution" value="1.55 A"/>
    <property type="chains" value="A=166-171"/>
</dbReference>
<dbReference type="PDB" id="8ANK">
    <property type="method" value="X-ray"/>
    <property type="resolution" value="1.30 A"/>
    <property type="chains" value="A=118-123"/>
</dbReference>
<dbReference type="PDB" id="8JRV">
    <property type="method" value="EM"/>
    <property type="resolution" value="3.30 A"/>
    <property type="chains" value="G=53-81"/>
</dbReference>
<dbReference type="PDB" id="9IVG">
    <property type="method" value="EM"/>
    <property type="resolution" value="3.00 A"/>
    <property type="chains" value="P=100-127"/>
</dbReference>
<dbReference type="PDBsum" id="1BH0"/>
<dbReference type="PDBsum" id="1D0R"/>
<dbReference type="PDBsum" id="1NAU"/>
<dbReference type="PDBsum" id="2G49"/>
<dbReference type="PDBsum" id="2L63"/>
<dbReference type="PDBsum" id="2L64"/>
<dbReference type="PDBsum" id="2M5P"/>
<dbReference type="PDBsum" id="2M5Q"/>
<dbReference type="PDBsum" id="3IOL"/>
<dbReference type="PDBsum" id="4APD"/>
<dbReference type="PDBsum" id="4ZGM"/>
<dbReference type="PDBsum" id="5OTU"/>
<dbReference type="PDBsum" id="5OTV"/>
<dbReference type="PDBsum" id="5OTW"/>
<dbReference type="PDBsum" id="5OTX"/>
<dbReference type="PDBsum" id="5VAI"/>
<dbReference type="PDBsum" id="5YQZ"/>
<dbReference type="PDBsum" id="6EDS"/>
<dbReference type="PDBsum" id="6LMK"/>
<dbReference type="PDBsum" id="6LML"/>
<dbReference type="PDBsum" id="6NZN"/>
<dbReference type="PDBsum" id="6PHI"/>
<dbReference type="PDBsum" id="6PHJ"/>
<dbReference type="PDBsum" id="6PHK"/>
<dbReference type="PDBsum" id="6PHL"/>
<dbReference type="PDBsum" id="6PHO"/>
<dbReference type="PDBsum" id="6PHP"/>
<dbReference type="PDBsum" id="6VCB"/>
<dbReference type="PDBsum" id="6X18"/>
<dbReference type="PDBsum" id="7D68"/>
<dbReference type="PDBsum" id="7DUQ"/>
<dbReference type="PDBsum" id="7KI0"/>
<dbReference type="PDBsum" id="7KI1"/>
<dbReference type="PDBsum" id="7XM8"/>
<dbReference type="PDBsum" id="8ANJ"/>
<dbReference type="PDBsum" id="8ANK"/>
<dbReference type="PDBsum" id="8JRV"/>
<dbReference type="PDBsum" id="9IVG"/>
<dbReference type="EMDB" id="EMD-0917"/>
<dbReference type="EMDB" id="EMD-0918"/>
<dbReference type="EMDB" id="EMD-21147"/>
<dbReference type="EMDB" id="EMD-21992"/>
<dbReference type="EMDB" id="EMD-30590"/>
<dbReference type="EMDB" id="EMD-30866"/>
<dbReference type="EMDB" id="EMD-33290"/>
<dbReference type="EMDB" id="EMD-36607"/>
<dbReference type="EMDB" id="EMD-8653"/>
<dbReference type="SMR" id="P01275"/>
<dbReference type="BioGRID" id="108911">
    <property type="interactions" value="269"/>
</dbReference>
<dbReference type="DIP" id="DIP-46470N"/>
<dbReference type="FunCoup" id="P01275">
    <property type="interactions" value="643"/>
</dbReference>
<dbReference type="IntAct" id="P01275">
    <property type="interactions" value="28"/>
</dbReference>
<dbReference type="MINT" id="P01275"/>
<dbReference type="STRING" id="9606.ENSP00000387662"/>
<dbReference type="BindingDB" id="P01275"/>
<dbReference type="ChEMBL" id="CHEMBL5736"/>
<dbReference type="DrugBank" id="DB15194">
    <property type="generic name" value="Cotadutide"/>
</dbReference>
<dbReference type="iPTMnet" id="P01275"/>
<dbReference type="PhosphoSitePlus" id="P01275"/>
<dbReference type="BioMuta" id="GCG"/>
<dbReference type="DMDM" id="125987831"/>
<dbReference type="jPOST" id="P01275"/>
<dbReference type="MassIVE" id="P01275"/>
<dbReference type="PaxDb" id="9606-ENSP00000387662"/>
<dbReference type="PeptideAtlas" id="P01275"/>
<dbReference type="ProteomicsDB" id="51367"/>
<dbReference type="ABCD" id="P01275">
    <property type="antibodies" value="12 sequenced antibodies"/>
</dbReference>
<dbReference type="Antibodypedia" id="3506">
    <property type="antibodies" value="1901 antibodies from 47 providers"/>
</dbReference>
<dbReference type="DNASU" id="2641"/>
<dbReference type="Ensembl" id="ENST00000375497.3">
    <property type="protein sequence ID" value="ENSP00000364647.3"/>
    <property type="gene ID" value="ENSG00000115263.15"/>
</dbReference>
<dbReference type="Ensembl" id="ENST00000418842.7">
    <property type="protein sequence ID" value="ENSP00000387662.2"/>
    <property type="gene ID" value="ENSG00000115263.15"/>
</dbReference>
<dbReference type="GeneID" id="2641"/>
<dbReference type="KEGG" id="hsa:2641"/>
<dbReference type="MANE-Select" id="ENST00000418842.7">
    <property type="protein sequence ID" value="ENSP00000387662.2"/>
    <property type="RefSeq nucleotide sequence ID" value="NM_002054.5"/>
    <property type="RefSeq protein sequence ID" value="NP_002045.1"/>
</dbReference>
<dbReference type="UCSC" id="uc002ucc.5">
    <property type="organism name" value="human"/>
</dbReference>
<dbReference type="AGR" id="HGNC:4191"/>
<dbReference type="CTD" id="2641"/>
<dbReference type="DisGeNET" id="2641"/>
<dbReference type="GeneCards" id="GCG"/>
<dbReference type="HGNC" id="HGNC:4191">
    <property type="gene designation" value="GCG"/>
</dbReference>
<dbReference type="HPA" id="ENSG00000115263">
    <property type="expression patterns" value="Tissue enriched (pancreas)"/>
</dbReference>
<dbReference type="MIM" id="138030">
    <property type="type" value="gene"/>
</dbReference>
<dbReference type="neXtProt" id="NX_P01275"/>
<dbReference type="OpenTargets" id="ENSG00000115263"/>
<dbReference type="PharmGKB" id="PA28606"/>
<dbReference type="VEuPathDB" id="HostDB:ENSG00000115263"/>
<dbReference type="eggNOG" id="ENOG502RYPR">
    <property type="taxonomic scope" value="Eukaryota"/>
</dbReference>
<dbReference type="GeneTree" id="ENSGT00390000005372"/>
<dbReference type="HOGENOM" id="CLU_090687_0_0_1"/>
<dbReference type="InParanoid" id="P01275"/>
<dbReference type="OMA" id="MNTKRNX"/>
<dbReference type="OrthoDB" id="9904258at2759"/>
<dbReference type="PAN-GO" id="P01275">
    <property type="GO annotations" value="7 GO annotations based on evolutionary models"/>
</dbReference>
<dbReference type="PhylomeDB" id="P01275"/>
<dbReference type="TreeFam" id="TF332333"/>
<dbReference type="PathwayCommons" id="P01275"/>
<dbReference type="Reactome" id="R-HSA-163359">
    <property type="pathway name" value="Glucagon signaling in metabolic regulation"/>
</dbReference>
<dbReference type="Reactome" id="R-HSA-381676">
    <property type="pathway name" value="Glucagon-like Peptide-1 (GLP1) regulates insulin secretion"/>
</dbReference>
<dbReference type="Reactome" id="R-HSA-381771">
    <property type="pathway name" value="Synthesis, secretion, and inactivation of Glucagon-like Peptide-1 (GLP-1)"/>
</dbReference>
<dbReference type="Reactome" id="R-HSA-416476">
    <property type="pathway name" value="G alpha (q) signalling events"/>
</dbReference>
<dbReference type="Reactome" id="R-HSA-418555">
    <property type="pathway name" value="G alpha (s) signalling events"/>
</dbReference>
<dbReference type="Reactome" id="R-HSA-420092">
    <property type="pathway name" value="Glucagon-type ligand receptors"/>
</dbReference>
<dbReference type="Reactome" id="R-HSA-422085">
    <property type="pathway name" value="Synthesis, secretion, and deacylation of Ghrelin"/>
</dbReference>
<dbReference type="SignaLink" id="P01275"/>
<dbReference type="SIGNOR" id="P01275"/>
<dbReference type="BioGRID-ORCS" id="2641">
    <property type="hits" value="7 hits in 1144 CRISPR screens"/>
</dbReference>
<dbReference type="ChiTaRS" id="GCG">
    <property type="organism name" value="human"/>
</dbReference>
<dbReference type="EvolutionaryTrace" id="P01275"/>
<dbReference type="GeneWiki" id="Glucagon"/>
<dbReference type="GenomeRNAi" id="2641"/>
<dbReference type="Pharos" id="P01275">
    <property type="development level" value="Tchem"/>
</dbReference>
<dbReference type="PRO" id="PR:P01275"/>
<dbReference type="Proteomes" id="UP000005640">
    <property type="component" value="Chromosome 2"/>
</dbReference>
<dbReference type="RNAct" id="P01275">
    <property type="molecule type" value="protein"/>
</dbReference>
<dbReference type="Bgee" id="ENSG00000115263">
    <property type="expression patterns" value="Expressed in type B pancreatic cell and 115 other cell types or tissues"/>
</dbReference>
<dbReference type="GO" id="GO:0005788">
    <property type="term" value="C:endoplasmic reticulum lumen"/>
    <property type="evidence" value="ECO:0000304"/>
    <property type="project" value="Reactome"/>
</dbReference>
<dbReference type="GO" id="GO:0005576">
    <property type="term" value="C:extracellular region"/>
    <property type="evidence" value="ECO:0000304"/>
    <property type="project" value="Reactome"/>
</dbReference>
<dbReference type="GO" id="GO:0005615">
    <property type="term" value="C:extracellular space"/>
    <property type="evidence" value="ECO:0000250"/>
    <property type="project" value="UniProtKB"/>
</dbReference>
<dbReference type="GO" id="GO:0005886">
    <property type="term" value="C:plasma membrane"/>
    <property type="evidence" value="ECO:0007669"/>
    <property type="project" value="Ensembl"/>
</dbReference>
<dbReference type="GO" id="GO:0034774">
    <property type="term" value="C:secretory granule lumen"/>
    <property type="evidence" value="ECO:0000304"/>
    <property type="project" value="Reactome"/>
</dbReference>
<dbReference type="GO" id="GO:0031769">
    <property type="term" value="F:glucagon receptor binding"/>
    <property type="evidence" value="ECO:0000318"/>
    <property type="project" value="GO_Central"/>
</dbReference>
<dbReference type="GO" id="GO:0005179">
    <property type="term" value="F:hormone activity"/>
    <property type="evidence" value="ECO:0000318"/>
    <property type="project" value="GO_Central"/>
</dbReference>
<dbReference type="GO" id="GO:0042802">
    <property type="term" value="F:identical protein binding"/>
    <property type="evidence" value="ECO:0000353"/>
    <property type="project" value="IntAct"/>
</dbReference>
<dbReference type="GO" id="GO:0048018">
    <property type="term" value="F:receptor ligand activity"/>
    <property type="evidence" value="ECO:0000304"/>
    <property type="project" value="Reactome"/>
</dbReference>
<dbReference type="GO" id="GO:0005102">
    <property type="term" value="F:signaling receptor binding"/>
    <property type="evidence" value="ECO:0000304"/>
    <property type="project" value="ProtInc"/>
</dbReference>
<dbReference type="GO" id="GO:0007189">
    <property type="term" value="P:adenylate cyclase-activating G protein-coupled receptor signaling pathway"/>
    <property type="evidence" value="ECO:0007669"/>
    <property type="project" value="Ensembl"/>
</dbReference>
<dbReference type="GO" id="GO:0007188">
    <property type="term" value="P:adenylate cyclase-modulating G protein-coupled receptor signaling pathway"/>
    <property type="evidence" value="ECO:0000318"/>
    <property type="project" value="GO_Central"/>
</dbReference>
<dbReference type="GO" id="GO:0071377">
    <property type="term" value="P:cellular response to glucagon stimulus"/>
    <property type="evidence" value="ECO:0000304"/>
    <property type="project" value="Reactome"/>
</dbReference>
<dbReference type="GO" id="GO:0007631">
    <property type="term" value="P:feeding behavior"/>
    <property type="evidence" value="ECO:0000304"/>
    <property type="project" value="ProtInc"/>
</dbReference>
<dbReference type="GO" id="GO:0007186">
    <property type="term" value="P:G protein-coupled receptor signaling pathway"/>
    <property type="evidence" value="ECO:0000304"/>
    <property type="project" value="GO_Central"/>
</dbReference>
<dbReference type="GO" id="GO:0006094">
    <property type="term" value="P:gluconeogenesis"/>
    <property type="evidence" value="ECO:0007669"/>
    <property type="project" value="Ensembl"/>
</dbReference>
<dbReference type="GO" id="GO:0042593">
    <property type="term" value="P:glucose homeostasis"/>
    <property type="evidence" value="ECO:0000250"/>
    <property type="project" value="UniProtKB"/>
</dbReference>
<dbReference type="GO" id="GO:0043066">
    <property type="term" value="P:negative regulation of apoptotic process"/>
    <property type="evidence" value="ECO:0000318"/>
    <property type="project" value="GO_Central"/>
</dbReference>
<dbReference type="GO" id="GO:1900118">
    <property type="term" value="P:negative regulation of execution phase of apoptosis"/>
    <property type="evidence" value="ECO:0007669"/>
    <property type="project" value="Ensembl"/>
</dbReference>
<dbReference type="GO" id="GO:0090280">
    <property type="term" value="P:positive regulation of calcium ion import"/>
    <property type="evidence" value="ECO:0007669"/>
    <property type="project" value="Ensembl"/>
</dbReference>
<dbReference type="GO" id="GO:0070374">
    <property type="term" value="P:positive regulation of ERK1 and ERK2 cascade"/>
    <property type="evidence" value="ECO:0007669"/>
    <property type="project" value="Ensembl"/>
</dbReference>
<dbReference type="GO" id="GO:0045722">
    <property type="term" value="P:positive regulation of gluconeogenesis"/>
    <property type="evidence" value="ECO:0007669"/>
    <property type="project" value="Ensembl"/>
</dbReference>
<dbReference type="GO" id="GO:0035774">
    <property type="term" value="P:positive regulation of insulin secretion involved in cellular response to glucose stimulus"/>
    <property type="evidence" value="ECO:0000318"/>
    <property type="project" value="GO_Central"/>
</dbReference>
<dbReference type="GO" id="GO:0010737">
    <property type="term" value="P:protein kinase A signaling"/>
    <property type="evidence" value="ECO:0000318"/>
    <property type="project" value="GO_Central"/>
</dbReference>
<dbReference type="GO" id="GO:0050796">
    <property type="term" value="P:regulation of insulin secretion"/>
    <property type="evidence" value="ECO:0000250"/>
    <property type="project" value="UniProtKB"/>
</dbReference>
<dbReference type="GO" id="GO:0014823">
    <property type="term" value="P:response to activity"/>
    <property type="evidence" value="ECO:0000250"/>
    <property type="project" value="UniProtKB"/>
</dbReference>
<dbReference type="Gene3D" id="6.10.250.590">
    <property type="match status" value="3"/>
</dbReference>
<dbReference type="InterPro" id="IPR015550">
    <property type="entry name" value="Glucagon"/>
</dbReference>
<dbReference type="InterPro" id="IPR000532">
    <property type="entry name" value="Glucagon_GIP_secretin_VIP"/>
</dbReference>
<dbReference type="PANTHER" id="PTHR11418">
    <property type="entry name" value="GLUCAGON"/>
    <property type="match status" value="1"/>
</dbReference>
<dbReference type="PANTHER" id="PTHR11418:SF0">
    <property type="entry name" value="PRO-GLUCAGON"/>
    <property type="match status" value="1"/>
</dbReference>
<dbReference type="Pfam" id="PF00123">
    <property type="entry name" value="Hormone_2"/>
    <property type="match status" value="3"/>
</dbReference>
<dbReference type="PRINTS" id="PR00275">
    <property type="entry name" value="GLUCAGON"/>
</dbReference>
<dbReference type="SMART" id="SM00070">
    <property type="entry name" value="GLUCA"/>
    <property type="match status" value="3"/>
</dbReference>
<dbReference type="PROSITE" id="PS00260">
    <property type="entry name" value="GLUCAGON"/>
    <property type="match status" value="4"/>
</dbReference>